<name>YQGF_PROM4</name>
<feature type="chain" id="PRO_1000131057" description="Putative pre-16S rRNA nuclease">
    <location>
        <begin position="1"/>
        <end position="145"/>
    </location>
</feature>
<keyword id="KW-0963">Cytoplasm</keyword>
<keyword id="KW-0378">Hydrolase</keyword>
<keyword id="KW-0540">Nuclease</keyword>
<keyword id="KW-1185">Reference proteome</keyword>
<keyword id="KW-0690">Ribosome biogenesis</keyword>
<reference key="1">
    <citation type="journal article" date="2007" name="PLoS Genet.">
        <title>Patterns and implications of gene gain and loss in the evolution of Prochlorococcus.</title>
        <authorList>
            <person name="Kettler G.C."/>
            <person name="Martiny A.C."/>
            <person name="Huang K."/>
            <person name="Zucker J."/>
            <person name="Coleman M.L."/>
            <person name="Rodrigue S."/>
            <person name="Chen F."/>
            <person name="Lapidus A."/>
            <person name="Ferriera S."/>
            <person name="Johnson J."/>
            <person name="Steglich C."/>
            <person name="Church G.M."/>
            <person name="Richardson P."/>
            <person name="Chisholm S.W."/>
        </authorList>
    </citation>
    <scope>NUCLEOTIDE SEQUENCE [LARGE SCALE GENOMIC DNA]</scope>
    <source>
        <strain>MIT 9211</strain>
    </source>
</reference>
<protein>
    <recommendedName>
        <fullName evidence="1">Putative pre-16S rRNA nuclease</fullName>
        <ecNumber evidence="1">3.1.-.-</ecNumber>
    </recommendedName>
</protein>
<gene>
    <name type="ordered locus">P9211_09701</name>
</gene>
<organism>
    <name type="scientific">Prochlorococcus marinus (strain MIT 9211)</name>
    <dbReference type="NCBI Taxonomy" id="93059"/>
    <lineage>
        <taxon>Bacteria</taxon>
        <taxon>Bacillati</taxon>
        <taxon>Cyanobacteriota</taxon>
        <taxon>Cyanophyceae</taxon>
        <taxon>Synechococcales</taxon>
        <taxon>Prochlorococcaceae</taxon>
        <taxon>Prochlorococcus</taxon>
    </lineage>
</organism>
<evidence type="ECO:0000255" key="1">
    <source>
        <dbReference type="HAMAP-Rule" id="MF_00651"/>
    </source>
</evidence>
<accession>A9BAN9</accession>
<comment type="function">
    <text evidence="1">Could be a nuclease involved in processing of the 5'-end of pre-16S rRNA.</text>
</comment>
<comment type="subcellular location">
    <subcellularLocation>
        <location evidence="1">Cytoplasm</location>
    </subcellularLocation>
</comment>
<comment type="similarity">
    <text evidence="1">Belongs to the YqgF nuclease family.</text>
</comment>
<proteinExistence type="inferred from homology"/>
<dbReference type="EC" id="3.1.-.-" evidence="1"/>
<dbReference type="EMBL" id="CP000878">
    <property type="protein sequence ID" value="ABX08901.1"/>
    <property type="molecule type" value="Genomic_DNA"/>
</dbReference>
<dbReference type="RefSeq" id="WP_012195522.1">
    <property type="nucleotide sequence ID" value="NC_009976.1"/>
</dbReference>
<dbReference type="SMR" id="A9BAN9"/>
<dbReference type="STRING" id="93059.P9211_09701"/>
<dbReference type="KEGG" id="pmj:P9211_09701"/>
<dbReference type="eggNOG" id="COG0816">
    <property type="taxonomic scope" value="Bacteria"/>
</dbReference>
<dbReference type="HOGENOM" id="CLU_098240_3_1_3"/>
<dbReference type="OrthoDB" id="9796140at2"/>
<dbReference type="Proteomes" id="UP000000788">
    <property type="component" value="Chromosome"/>
</dbReference>
<dbReference type="GO" id="GO:0005829">
    <property type="term" value="C:cytosol"/>
    <property type="evidence" value="ECO:0007669"/>
    <property type="project" value="TreeGrafter"/>
</dbReference>
<dbReference type="GO" id="GO:0004518">
    <property type="term" value="F:nuclease activity"/>
    <property type="evidence" value="ECO:0007669"/>
    <property type="project" value="UniProtKB-KW"/>
</dbReference>
<dbReference type="GO" id="GO:0000967">
    <property type="term" value="P:rRNA 5'-end processing"/>
    <property type="evidence" value="ECO:0007669"/>
    <property type="project" value="UniProtKB-UniRule"/>
</dbReference>
<dbReference type="CDD" id="cd16964">
    <property type="entry name" value="YqgF"/>
    <property type="match status" value="1"/>
</dbReference>
<dbReference type="Gene3D" id="3.30.420.140">
    <property type="entry name" value="YqgF/RNase H-like domain"/>
    <property type="match status" value="1"/>
</dbReference>
<dbReference type="HAMAP" id="MF_00651">
    <property type="entry name" value="Nuclease_YqgF"/>
    <property type="match status" value="1"/>
</dbReference>
<dbReference type="InterPro" id="IPR012337">
    <property type="entry name" value="RNaseH-like_sf"/>
</dbReference>
<dbReference type="InterPro" id="IPR005227">
    <property type="entry name" value="YqgF"/>
</dbReference>
<dbReference type="InterPro" id="IPR006641">
    <property type="entry name" value="YqgF/RNaseH-like_dom"/>
</dbReference>
<dbReference type="InterPro" id="IPR037027">
    <property type="entry name" value="YqgF/RNaseH-like_dom_sf"/>
</dbReference>
<dbReference type="NCBIfam" id="TIGR00250">
    <property type="entry name" value="RNAse_H_YqgF"/>
    <property type="match status" value="1"/>
</dbReference>
<dbReference type="PANTHER" id="PTHR33317">
    <property type="entry name" value="POLYNUCLEOTIDYL TRANSFERASE, RIBONUCLEASE H-LIKE SUPERFAMILY PROTEIN"/>
    <property type="match status" value="1"/>
</dbReference>
<dbReference type="PANTHER" id="PTHR33317:SF4">
    <property type="entry name" value="POLYNUCLEOTIDYL TRANSFERASE, RIBONUCLEASE H-LIKE SUPERFAMILY PROTEIN"/>
    <property type="match status" value="1"/>
</dbReference>
<dbReference type="Pfam" id="PF03652">
    <property type="entry name" value="RuvX"/>
    <property type="match status" value="1"/>
</dbReference>
<dbReference type="SMART" id="SM00732">
    <property type="entry name" value="YqgFc"/>
    <property type="match status" value="1"/>
</dbReference>
<dbReference type="SUPFAM" id="SSF53098">
    <property type="entry name" value="Ribonuclease H-like"/>
    <property type="match status" value="1"/>
</dbReference>
<sequence>MLPAISKSVLSLDVGKRRIGIAGCDPLGITITQLEAIKRTTFNNEATQLRQLCDLRDVRGIIIGLPLSDLGKETKQSSYCYTYGINIAKELNLPLAWVNEHSSTWEAGQRFKLQNDRSGKLDSAAAALLLEQWLTEGPELEFLKN</sequence>